<protein>
    <recommendedName>
        <fullName>Daunorubicin/doxorubicin resistance ATP-binding protein DrrA</fullName>
        <ecNumber evidence="5">7.6.2.2</ecNumber>
    </recommendedName>
</protein>
<comment type="function">
    <text evidence="2 3">Part of the ABC transporter complex DrrAB involved in daunorubicin and doxorubicin resistance. Responsible for energy coupling to the transport system. Binds ATP or GTP.</text>
</comment>
<comment type="catalytic activity">
    <reaction evidence="5">
        <text>daunorubicin(in) + ATP + H2O = daunorubicin(out) + ADP + phosphate + H(+)</text>
        <dbReference type="Rhea" id="RHEA:33147"/>
        <dbReference type="ChEBI" id="CHEBI:15377"/>
        <dbReference type="ChEBI" id="CHEBI:15378"/>
        <dbReference type="ChEBI" id="CHEBI:30616"/>
        <dbReference type="ChEBI" id="CHEBI:43474"/>
        <dbReference type="ChEBI" id="CHEBI:64677"/>
        <dbReference type="ChEBI" id="CHEBI:456216"/>
        <dbReference type="EC" id="7.6.2.2"/>
    </reaction>
</comment>
<comment type="subunit">
    <text evidence="5">The complex is composed of two ATP-binding proteins (DrrA) and two transmembrane proteins (DrrB).</text>
</comment>
<comment type="subcellular location">
    <subcellularLocation>
        <location evidence="3">Cell membrane</location>
        <topology evidence="3">Peripheral membrane protein</topology>
        <orientation evidence="3">Cytoplasmic side</orientation>
    </subcellularLocation>
</comment>
<comment type="similarity">
    <text evidence="4">Belongs to the ABC transporter superfamily. Drug exporter-1 (DrugE1) (TC 3.A.1.105) family.</text>
</comment>
<feature type="chain" id="PRO_0000092319" description="Daunorubicin/doxorubicin resistance ATP-binding protein DrrA">
    <location>
        <begin position="1"/>
        <end position="330"/>
    </location>
</feature>
<feature type="domain" description="ABC transporter" evidence="1">
    <location>
        <begin position="9"/>
        <end position="239"/>
    </location>
</feature>
<feature type="binding site" evidence="1">
    <location>
        <begin position="41"/>
        <end position="48"/>
    </location>
    <ligand>
        <name>ATP</name>
        <dbReference type="ChEBI" id="CHEBI:30616"/>
    </ligand>
</feature>
<reference key="1">
    <citation type="journal article" date="1991" name="Proc. Natl. Acad. Sci. U.S.A.">
        <title>A bacterial analog of the mdr gene of mammalian tumor cells is present in Streptomyces peucetius, the producer of daunorubicin and doxorubicin.</title>
        <authorList>
            <person name="Guilfoile P.G."/>
            <person name="Hutchinson C.R."/>
        </authorList>
    </citation>
    <scope>NUCLEOTIDE SEQUENCE [GENOMIC DNA]</scope>
    <scope>FUNCTION IN RESISTANCE</scope>
    <source>
        <strain>ATCC 29050 / DSM 40754 / JCM 9920 / NBRC 100596 / NCIMB 10972</strain>
    </source>
</reference>
<reference key="2">
    <citation type="journal article" date="1997" name="J. Bacteriol.">
        <title>Expression and characterization of DrrA and DrrB proteins of Streptomyces peucetius in Escherichia coli: DrrA is an ATP binding protein.</title>
        <authorList>
            <person name="Kaur P."/>
        </authorList>
    </citation>
    <scope>FUNCTION</scope>
    <scope>ATP-BINDING</scope>
    <scope>SUBUNIT</scope>
    <scope>SUBCELLULAR LOCATION</scope>
</reference>
<sequence>MNTQPTRAIETSGLVKVYNGTRAVDGLDLNVPAGLVYGILGPNGAGKSTTIRMLATLLRPDGGTARVFGHDVTSEPDTVRRRISVTGQYASVDEGLTGTENLVMMGRLQGYSWARARERAAELIDGFGLGDARDRLLKTYSGGMRRRLDIAASIVVTPDLLFLDEPTTGLDPRSRNQVWDIVRALVDAGTTVLLTTQYLDEADQLADRIAVIDHGRVIAEGTTGELKSSLGSNVLRLRLHDAQSRAEAERLLSAELGVTIHRDSDPTALSARIDDPRQGMRALAELSRTHLEVRSFSLGQSSLDEVFLALTGHPADDRSTEEAAEEEKVA</sequence>
<keyword id="KW-0046">Antibiotic resistance</keyword>
<keyword id="KW-0067">ATP-binding</keyword>
<keyword id="KW-1003">Cell membrane</keyword>
<keyword id="KW-0472">Membrane</keyword>
<keyword id="KW-0547">Nucleotide-binding</keyword>
<keyword id="KW-1278">Translocase</keyword>
<keyword id="KW-0813">Transport</keyword>
<organism>
    <name type="scientific">Streptomyces peucetius</name>
    <dbReference type="NCBI Taxonomy" id="1950"/>
    <lineage>
        <taxon>Bacteria</taxon>
        <taxon>Bacillati</taxon>
        <taxon>Actinomycetota</taxon>
        <taxon>Actinomycetes</taxon>
        <taxon>Kitasatosporales</taxon>
        <taxon>Streptomycetaceae</taxon>
        <taxon>Streptomyces</taxon>
    </lineage>
</organism>
<evidence type="ECO:0000255" key="1">
    <source>
        <dbReference type="PROSITE-ProRule" id="PRU00434"/>
    </source>
</evidence>
<evidence type="ECO:0000269" key="2">
    <source>
    </source>
</evidence>
<evidence type="ECO:0000269" key="3">
    <source>
    </source>
</evidence>
<evidence type="ECO:0000305" key="4"/>
<evidence type="ECO:0000305" key="5">
    <source>
    </source>
</evidence>
<proteinExistence type="evidence at protein level"/>
<accession>P32010</accession>
<gene>
    <name type="primary">drrA</name>
</gene>
<name>DRRA_STRPE</name>
<dbReference type="EC" id="7.6.2.2" evidence="5"/>
<dbReference type="EMBL" id="M73758">
    <property type="protein sequence ID" value="AAA74717.1"/>
    <property type="molecule type" value="Genomic_DNA"/>
</dbReference>
<dbReference type="PIR" id="S27707">
    <property type="entry name" value="S27707"/>
</dbReference>
<dbReference type="SMR" id="P32010"/>
<dbReference type="TCDB" id="3.A.1.105.1">
    <property type="family name" value="the atp-binding cassette (abc) superfamily"/>
</dbReference>
<dbReference type="KEGG" id="ag:AAA74717"/>
<dbReference type="BRENDA" id="7.6.2.2">
    <property type="organism ID" value="6073"/>
</dbReference>
<dbReference type="GO" id="GO:0009898">
    <property type="term" value="C:cytoplasmic side of plasma membrane"/>
    <property type="evidence" value="ECO:0000314"/>
    <property type="project" value="UniProtKB"/>
</dbReference>
<dbReference type="GO" id="GO:0008559">
    <property type="term" value="F:ABC-type xenobiotic transporter activity"/>
    <property type="evidence" value="ECO:0007669"/>
    <property type="project" value="RHEA"/>
</dbReference>
<dbReference type="GO" id="GO:0005524">
    <property type="term" value="F:ATP binding"/>
    <property type="evidence" value="ECO:0000314"/>
    <property type="project" value="UniProtKB"/>
</dbReference>
<dbReference type="GO" id="GO:0016887">
    <property type="term" value="F:ATP hydrolysis activity"/>
    <property type="evidence" value="ECO:0007669"/>
    <property type="project" value="InterPro"/>
</dbReference>
<dbReference type="GO" id="GO:0005525">
    <property type="term" value="F:GTP binding"/>
    <property type="evidence" value="ECO:0000314"/>
    <property type="project" value="UniProtKB"/>
</dbReference>
<dbReference type="GO" id="GO:0043215">
    <property type="term" value="P:daunorubicin transport"/>
    <property type="evidence" value="ECO:0007669"/>
    <property type="project" value="InterPro"/>
</dbReference>
<dbReference type="GO" id="GO:1900753">
    <property type="term" value="P:doxorubicin transport"/>
    <property type="evidence" value="ECO:0007669"/>
    <property type="project" value="InterPro"/>
</dbReference>
<dbReference type="GO" id="GO:0046677">
    <property type="term" value="P:response to antibiotic"/>
    <property type="evidence" value="ECO:0007669"/>
    <property type="project" value="UniProtKB-KW"/>
</dbReference>
<dbReference type="FunFam" id="3.40.50.300:FF:000589">
    <property type="entry name" value="ABC transporter, ATP-binding subunit"/>
    <property type="match status" value="1"/>
</dbReference>
<dbReference type="Gene3D" id="3.40.50.300">
    <property type="entry name" value="P-loop containing nucleotide triphosphate hydrolases"/>
    <property type="match status" value="1"/>
</dbReference>
<dbReference type="InterPro" id="IPR003593">
    <property type="entry name" value="AAA+_ATPase"/>
</dbReference>
<dbReference type="InterPro" id="IPR003439">
    <property type="entry name" value="ABC_transporter-like_ATP-bd"/>
</dbReference>
<dbReference type="InterPro" id="IPR017871">
    <property type="entry name" value="ABC_transporter-like_CS"/>
</dbReference>
<dbReference type="InterPro" id="IPR050763">
    <property type="entry name" value="ABC_transporter_ATP-binding"/>
</dbReference>
<dbReference type="InterPro" id="IPR005894">
    <property type="entry name" value="DrrA"/>
</dbReference>
<dbReference type="InterPro" id="IPR025302">
    <property type="entry name" value="DrrA1-3-like_C"/>
</dbReference>
<dbReference type="InterPro" id="IPR027417">
    <property type="entry name" value="P-loop_NTPase"/>
</dbReference>
<dbReference type="NCBIfam" id="TIGR01188">
    <property type="entry name" value="drrA"/>
    <property type="match status" value="1"/>
</dbReference>
<dbReference type="PANTHER" id="PTHR42711">
    <property type="entry name" value="ABC TRANSPORTER ATP-BINDING PROTEIN"/>
    <property type="match status" value="1"/>
</dbReference>
<dbReference type="PANTHER" id="PTHR42711:SF19">
    <property type="entry name" value="DOXORUBICIN RESISTANCE ATP-BINDING PROTEIN DRRA"/>
    <property type="match status" value="1"/>
</dbReference>
<dbReference type="Pfam" id="PF00005">
    <property type="entry name" value="ABC_tran"/>
    <property type="match status" value="1"/>
</dbReference>
<dbReference type="Pfam" id="PF13732">
    <property type="entry name" value="DrrA1-3_C"/>
    <property type="match status" value="1"/>
</dbReference>
<dbReference type="SMART" id="SM00382">
    <property type="entry name" value="AAA"/>
    <property type="match status" value="1"/>
</dbReference>
<dbReference type="SUPFAM" id="SSF52540">
    <property type="entry name" value="P-loop containing nucleoside triphosphate hydrolases"/>
    <property type="match status" value="1"/>
</dbReference>
<dbReference type="PROSITE" id="PS00211">
    <property type="entry name" value="ABC_TRANSPORTER_1"/>
    <property type="match status" value="1"/>
</dbReference>
<dbReference type="PROSITE" id="PS50893">
    <property type="entry name" value="ABC_TRANSPORTER_2"/>
    <property type="match status" value="1"/>
</dbReference>